<keyword id="KW-0963">Cytoplasm</keyword>
<keyword id="KW-0251">Elongation factor</keyword>
<keyword id="KW-0342">GTP-binding</keyword>
<keyword id="KW-0547">Nucleotide-binding</keyword>
<keyword id="KW-0648">Protein biosynthesis</keyword>
<comment type="function">
    <text evidence="1">Catalyzes the GTP-dependent ribosomal translocation step during translation elongation. During this step, the ribosome changes from the pre-translocational (PRE) to the post-translocational (POST) state as the newly formed A-site-bound peptidyl-tRNA and P-site-bound deacylated tRNA move to the P and E sites, respectively. Catalyzes the coordinated movement of the two tRNA molecules, the mRNA and conformational changes in the ribosome.</text>
</comment>
<comment type="subcellular location">
    <subcellularLocation>
        <location evidence="1">Cytoplasm</location>
    </subcellularLocation>
</comment>
<comment type="similarity">
    <text evidence="1">Belongs to the TRAFAC class translation factor GTPase superfamily. Classic translation factor GTPase family. EF-G/EF-2 subfamily.</text>
</comment>
<protein>
    <recommendedName>
        <fullName evidence="1">Elongation factor 2</fullName>
        <shortName evidence="1">EF-2</shortName>
    </recommendedName>
</protein>
<feature type="chain" id="PRO_0000091040" description="Elongation factor 2">
    <location>
        <begin position="1"/>
        <end position="732"/>
    </location>
</feature>
<feature type="domain" description="tr-type G">
    <location>
        <begin position="19"/>
        <end position="260"/>
    </location>
</feature>
<feature type="binding site" evidence="1">
    <location>
        <begin position="28"/>
        <end position="35"/>
    </location>
    <ligand>
        <name>GTP</name>
        <dbReference type="ChEBI" id="CHEBI:37565"/>
    </ligand>
</feature>
<feature type="binding site" evidence="1">
    <location>
        <begin position="94"/>
        <end position="98"/>
    </location>
    <ligand>
        <name>GTP</name>
        <dbReference type="ChEBI" id="CHEBI:37565"/>
    </ligand>
</feature>
<feature type="binding site" evidence="1">
    <location>
        <begin position="148"/>
        <end position="151"/>
    </location>
    <ligand>
        <name>GTP</name>
        <dbReference type="ChEBI" id="CHEBI:37565"/>
    </ligand>
</feature>
<feature type="modified residue" description="Diphthamide" evidence="1">
    <location>
        <position position="598"/>
    </location>
</feature>
<name>EF2_PICTO</name>
<reference key="1">
    <citation type="journal article" date="2004" name="Proc. Natl. Acad. Sci. U.S.A.">
        <title>Genome sequence of Picrophilus torridus and its implications for life around pH 0.</title>
        <authorList>
            <person name="Fuetterer O."/>
            <person name="Angelov A."/>
            <person name="Liesegang H."/>
            <person name="Gottschalk G."/>
            <person name="Schleper C."/>
            <person name="Schepers B."/>
            <person name="Dock C."/>
            <person name="Antranikian G."/>
            <person name="Liebl W."/>
        </authorList>
    </citation>
    <scope>NUCLEOTIDE SEQUENCE [LARGE SCALE GENOMIC DNA]</scope>
    <source>
        <strain>ATCC 700027 / DSM 9790 / JCM 10055 / NBRC 100828 / KAW 2/3</strain>
    </source>
</reference>
<evidence type="ECO:0000255" key="1">
    <source>
        <dbReference type="HAMAP-Rule" id="MF_00054"/>
    </source>
</evidence>
<sequence>MGRKEDNIAKAMKLIEIPERIRNIDIAAHIDHGKTTLSDNLIAGAGMMSEDLAGKQLLLDYDEQEQARGITINAANASMVHEVDGKEYLINLIDTPGHVDFGGDVTRAMRAVDGTIIVVDSVEGVMPQTETVVRQALKEKVKPVLFINKVDRLINELKLNAEEMQKRFVKIITDVNRLITKYAPPEFSKQWQVNVQAGTVAFGSAYNNWALSVPAMNIFKISFKEIYDYVSTGRQKELAKKAPLHKVVLDMVIKNLPNPREAQKYRIPQIWKGDLDSEIGKAMLSCDDNGPVSMMVTKIIIDPHAGEIAVGRLFSGIIRKGSELYVSGAGKTKVQVLSMMVGPDRIPIDEIAAGNIVAIIGLKGAIAGSTVSSLSDMEPFEPMTHYTDPVVTLAIEAKHTADLPKLIDVLRTISKADPSIQVDINQETGEHLISGMGELHLEVTIYRIKNDYKVDVVTSEPLVVYRETVDKKGGPFEGKSPNKHNRFYFQVEPLPENVVSAILDGKIPEGSKFKDKKAVMANLEEAGLTHDEARGLVCIYGTNVMLDMTKGIQYLDETMELLIESFNEAMDKGPLANEKVYGLKVSLMDAKLHEDSIHRGPAQVIPAGRNSIYGAMCEAGRVLLEPMQKVFISVPQEIMGSVTNELQQRRGVVEDMQQNGEEITIIAKVPVAGMIGFASAIRSATGGKVIWNSENAGYQRVPYEMQKDVVAKIRERKGLKPEPYNEEYYASL</sequence>
<proteinExistence type="inferred from homology"/>
<dbReference type="EMBL" id="AE017261">
    <property type="protein sequence ID" value="AAT43002.1"/>
    <property type="molecule type" value="Genomic_DNA"/>
</dbReference>
<dbReference type="RefSeq" id="WP_011177218.1">
    <property type="nucleotide sequence ID" value="NC_005877.1"/>
</dbReference>
<dbReference type="SMR" id="Q6L200"/>
<dbReference type="FunCoup" id="Q6L200">
    <property type="interactions" value="197"/>
</dbReference>
<dbReference type="STRING" id="263820.PTO0417"/>
<dbReference type="PaxDb" id="263820-PTO0417"/>
<dbReference type="GeneID" id="2844048"/>
<dbReference type="KEGG" id="pto:PTO0417"/>
<dbReference type="PATRIC" id="fig|263820.9.peg.442"/>
<dbReference type="eggNOG" id="arCOG01559">
    <property type="taxonomic scope" value="Archaea"/>
</dbReference>
<dbReference type="HOGENOM" id="CLU_002794_11_1_2"/>
<dbReference type="InParanoid" id="Q6L200"/>
<dbReference type="OrthoDB" id="6290at2157"/>
<dbReference type="Proteomes" id="UP000000438">
    <property type="component" value="Chromosome"/>
</dbReference>
<dbReference type="GO" id="GO:0005829">
    <property type="term" value="C:cytosol"/>
    <property type="evidence" value="ECO:0007669"/>
    <property type="project" value="TreeGrafter"/>
</dbReference>
<dbReference type="GO" id="GO:1990904">
    <property type="term" value="C:ribonucleoprotein complex"/>
    <property type="evidence" value="ECO:0007669"/>
    <property type="project" value="TreeGrafter"/>
</dbReference>
<dbReference type="GO" id="GO:0005525">
    <property type="term" value="F:GTP binding"/>
    <property type="evidence" value="ECO:0007669"/>
    <property type="project" value="UniProtKB-UniRule"/>
</dbReference>
<dbReference type="GO" id="GO:0003924">
    <property type="term" value="F:GTPase activity"/>
    <property type="evidence" value="ECO:0007669"/>
    <property type="project" value="InterPro"/>
</dbReference>
<dbReference type="GO" id="GO:0003746">
    <property type="term" value="F:translation elongation factor activity"/>
    <property type="evidence" value="ECO:0007669"/>
    <property type="project" value="UniProtKB-UniRule"/>
</dbReference>
<dbReference type="CDD" id="cd01681">
    <property type="entry name" value="aeEF2_snRNP_like_IV"/>
    <property type="match status" value="1"/>
</dbReference>
<dbReference type="CDD" id="cd01885">
    <property type="entry name" value="EF2"/>
    <property type="match status" value="1"/>
</dbReference>
<dbReference type="CDD" id="cd16268">
    <property type="entry name" value="EF2_II"/>
    <property type="match status" value="1"/>
</dbReference>
<dbReference type="CDD" id="cd16261">
    <property type="entry name" value="EF2_snRNP_III"/>
    <property type="match status" value="1"/>
</dbReference>
<dbReference type="CDD" id="cd01514">
    <property type="entry name" value="Elongation_Factor_C"/>
    <property type="match status" value="1"/>
</dbReference>
<dbReference type="FunFam" id="3.40.50.300:FF:000684">
    <property type="entry name" value="Elongation factor 2"/>
    <property type="match status" value="1"/>
</dbReference>
<dbReference type="FunFam" id="3.30.70.240:FF:000001">
    <property type="entry name" value="Elongation factor G"/>
    <property type="match status" value="1"/>
</dbReference>
<dbReference type="FunFam" id="3.30.70.870:FF:000002">
    <property type="entry name" value="Translation elongation factor 2"/>
    <property type="match status" value="1"/>
</dbReference>
<dbReference type="Gene3D" id="3.30.230.10">
    <property type="match status" value="1"/>
</dbReference>
<dbReference type="Gene3D" id="3.30.70.240">
    <property type="match status" value="1"/>
</dbReference>
<dbReference type="Gene3D" id="3.30.70.870">
    <property type="entry name" value="Elongation Factor G (Translational Gtpase), domain 3"/>
    <property type="match status" value="1"/>
</dbReference>
<dbReference type="Gene3D" id="3.40.50.300">
    <property type="entry name" value="P-loop containing nucleotide triphosphate hydrolases"/>
    <property type="match status" value="1"/>
</dbReference>
<dbReference type="Gene3D" id="2.40.30.10">
    <property type="entry name" value="Translation factors"/>
    <property type="match status" value="1"/>
</dbReference>
<dbReference type="HAMAP" id="MF_00054_A">
    <property type="entry name" value="EF_G_EF_2_A"/>
    <property type="match status" value="1"/>
</dbReference>
<dbReference type="InterPro" id="IPR041095">
    <property type="entry name" value="EFG_II"/>
</dbReference>
<dbReference type="InterPro" id="IPR035647">
    <property type="entry name" value="EFG_III/V"/>
</dbReference>
<dbReference type="InterPro" id="IPR000640">
    <property type="entry name" value="EFG_V-like"/>
</dbReference>
<dbReference type="InterPro" id="IPR004161">
    <property type="entry name" value="EFTu-like_2"/>
</dbReference>
<dbReference type="InterPro" id="IPR031157">
    <property type="entry name" value="G_TR_CS"/>
</dbReference>
<dbReference type="InterPro" id="IPR027417">
    <property type="entry name" value="P-loop_NTPase"/>
</dbReference>
<dbReference type="InterPro" id="IPR020568">
    <property type="entry name" value="Ribosomal_Su5_D2-typ_SF"/>
</dbReference>
<dbReference type="InterPro" id="IPR014721">
    <property type="entry name" value="Ribsml_uS5_D2-typ_fold_subgr"/>
</dbReference>
<dbReference type="InterPro" id="IPR005225">
    <property type="entry name" value="Small_GTP-bd"/>
</dbReference>
<dbReference type="InterPro" id="IPR000795">
    <property type="entry name" value="T_Tr_GTP-bd_dom"/>
</dbReference>
<dbReference type="InterPro" id="IPR009000">
    <property type="entry name" value="Transl_B-barrel_sf"/>
</dbReference>
<dbReference type="InterPro" id="IPR004543">
    <property type="entry name" value="Transl_elong_EFG/EF2_arc"/>
</dbReference>
<dbReference type="InterPro" id="IPR005517">
    <property type="entry name" value="Transl_elong_EFG/EF2_IV"/>
</dbReference>
<dbReference type="NCBIfam" id="TIGR00490">
    <property type="entry name" value="aEF-2"/>
    <property type="match status" value="1"/>
</dbReference>
<dbReference type="NCBIfam" id="TIGR00231">
    <property type="entry name" value="small_GTP"/>
    <property type="match status" value="1"/>
</dbReference>
<dbReference type="PANTHER" id="PTHR42908:SF3">
    <property type="entry name" value="ELONGATION FACTOR-LIKE GTPASE 1"/>
    <property type="match status" value="1"/>
</dbReference>
<dbReference type="PANTHER" id="PTHR42908">
    <property type="entry name" value="TRANSLATION ELONGATION FACTOR-RELATED"/>
    <property type="match status" value="1"/>
</dbReference>
<dbReference type="Pfam" id="PF00679">
    <property type="entry name" value="EFG_C"/>
    <property type="match status" value="1"/>
</dbReference>
<dbReference type="Pfam" id="PF14492">
    <property type="entry name" value="EFG_III"/>
    <property type="match status" value="1"/>
</dbReference>
<dbReference type="Pfam" id="PF03764">
    <property type="entry name" value="EFG_IV"/>
    <property type="match status" value="1"/>
</dbReference>
<dbReference type="Pfam" id="PF00009">
    <property type="entry name" value="GTP_EFTU"/>
    <property type="match status" value="1"/>
</dbReference>
<dbReference type="Pfam" id="PF03144">
    <property type="entry name" value="GTP_EFTU_D2"/>
    <property type="match status" value="1"/>
</dbReference>
<dbReference type="PRINTS" id="PR00315">
    <property type="entry name" value="ELONGATNFCT"/>
</dbReference>
<dbReference type="SMART" id="SM00838">
    <property type="entry name" value="EFG_C"/>
    <property type="match status" value="1"/>
</dbReference>
<dbReference type="SMART" id="SM00889">
    <property type="entry name" value="EFG_IV"/>
    <property type="match status" value="1"/>
</dbReference>
<dbReference type="SUPFAM" id="SSF54980">
    <property type="entry name" value="EF-G C-terminal domain-like"/>
    <property type="match status" value="2"/>
</dbReference>
<dbReference type="SUPFAM" id="SSF52540">
    <property type="entry name" value="P-loop containing nucleoside triphosphate hydrolases"/>
    <property type="match status" value="1"/>
</dbReference>
<dbReference type="SUPFAM" id="SSF54211">
    <property type="entry name" value="Ribosomal protein S5 domain 2-like"/>
    <property type="match status" value="1"/>
</dbReference>
<dbReference type="SUPFAM" id="SSF50447">
    <property type="entry name" value="Translation proteins"/>
    <property type="match status" value="1"/>
</dbReference>
<dbReference type="PROSITE" id="PS00301">
    <property type="entry name" value="G_TR_1"/>
    <property type="match status" value="1"/>
</dbReference>
<dbReference type="PROSITE" id="PS51722">
    <property type="entry name" value="G_TR_2"/>
    <property type="match status" value="1"/>
</dbReference>
<organism>
    <name type="scientific">Picrophilus torridus (strain ATCC 700027 / DSM 9790 / JCM 10055 / NBRC 100828 / KAW 2/3)</name>
    <dbReference type="NCBI Taxonomy" id="1122961"/>
    <lineage>
        <taxon>Archaea</taxon>
        <taxon>Methanobacteriati</taxon>
        <taxon>Thermoplasmatota</taxon>
        <taxon>Thermoplasmata</taxon>
        <taxon>Thermoplasmatales</taxon>
        <taxon>Picrophilaceae</taxon>
        <taxon>Picrophilus</taxon>
    </lineage>
</organism>
<accession>Q6L200</accession>
<gene>
    <name evidence="1" type="primary">fusA</name>
    <name type="ordered locus">PTO0417</name>
</gene>